<feature type="chain" id="PRO_1000130104" description="Ethanolamine ammonia-lyase small subunit">
    <location>
        <begin position="1"/>
        <end position="298"/>
    </location>
</feature>
<feature type="binding site" evidence="1">
    <location>
        <position position="210"/>
    </location>
    <ligand>
        <name>adenosylcob(III)alamin</name>
        <dbReference type="ChEBI" id="CHEBI:18408"/>
    </ligand>
</feature>
<feature type="binding site" evidence="1">
    <location>
        <position position="231"/>
    </location>
    <ligand>
        <name>adenosylcob(III)alamin</name>
        <dbReference type="ChEBI" id="CHEBI:18408"/>
    </ligand>
</feature>
<feature type="binding site" evidence="1">
    <location>
        <position position="261"/>
    </location>
    <ligand>
        <name>adenosylcob(III)alamin</name>
        <dbReference type="ChEBI" id="CHEBI:18408"/>
    </ligand>
</feature>
<reference key="1">
    <citation type="journal article" date="2011" name="J. Bacteriol.">
        <title>Comparative genomics of 28 Salmonella enterica isolates: evidence for CRISPR-mediated adaptive sublineage evolution.</title>
        <authorList>
            <person name="Fricke W.F."/>
            <person name="Mammel M.K."/>
            <person name="McDermott P.F."/>
            <person name="Tartera C."/>
            <person name="White D.G."/>
            <person name="Leclerc J.E."/>
            <person name="Ravel J."/>
            <person name="Cebula T.A."/>
        </authorList>
    </citation>
    <scope>NUCLEOTIDE SEQUENCE [LARGE SCALE GENOMIC DNA]</scope>
    <source>
        <strain>CVM19633</strain>
    </source>
</reference>
<keyword id="KW-1283">Bacterial microcompartment</keyword>
<keyword id="KW-0846">Cobalamin</keyword>
<keyword id="KW-0170">Cobalt</keyword>
<keyword id="KW-0456">Lyase</keyword>
<sequence>MDQKQIEEIVRSVMASMGQDVPQPAAPSTQEGAKPQCAVPTVAESCALDLGSAEAKAWIGVENPHRADVLTELRRSTAARVCTGRAGPRPRTQALLRFLADHSRSKDTVLKEVPEEWVKAQGLLEVRSEISDKNLYLTRPDMGRRLSPEAIDALKSQCVMNPDVQVVVSDGLSTDAITANYEEILPPLLAGLKQAGLNVGTPFFVRYGRVKIEDQIGEILGAKVVILLVGERPGLGQSESLSCYAVYSPRVATTVEADRTCISNIHQGGTPPVEAAAVIVDLAKRMLEQKASGINMTR</sequence>
<protein>
    <recommendedName>
        <fullName evidence="1">Ethanolamine ammonia-lyase small subunit</fullName>
        <shortName evidence="1">EAL small subunit</shortName>
        <ecNumber evidence="1">4.3.1.7</ecNumber>
    </recommendedName>
</protein>
<dbReference type="EC" id="4.3.1.7" evidence="1"/>
<dbReference type="EMBL" id="CP001127">
    <property type="protein sequence ID" value="ACF90850.1"/>
    <property type="molecule type" value="Genomic_DNA"/>
</dbReference>
<dbReference type="RefSeq" id="WP_000372336.1">
    <property type="nucleotide sequence ID" value="NC_011094.1"/>
</dbReference>
<dbReference type="SMR" id="B4TR32"/>
<dbReference type="KEGG" id="sew:SeSA_A2691"/>
<dbReference type="HOGENOM" id="CLU_068224_2_0_6"/>
<dbReference type="UniPathway" id="UPA00560"/>
<dbReference type="Proteomes" id="UP000001865">
    <property type="component" value="Chromosome"/>
</dbReference>
<dbReference type="GO" id="GO:0009350">
    <property type="term" value="C:ethanolamine ammonia-lyase complex"/>
    <property type="evidence" value="ECO:0007669"/>
    <property type="project" value="UniProtKB-UniRule"/>
</dbReference>
<dbReference type="GO" id="GO:0031471">
    <property type="term" value="C:ethanolamine degradation polyhedral organelle"/>
    <property type="evidence" value="ECO:0007669"/>
    <property type="project" value="UniProtKB-UniRule"/>
</dbReference>
<dbReference type="GO" id="GO:0031419">
    <property type="term" value="F:cobalamin binding"/>
    <property type="evidence" value="ECO:0007669"/>
    <property type="project" value="UniProtKB-UniRule"/>
</dbReference>
<dbReference type="GO" id="GO:0008851">
    <property type="term" value="F:ethanolamine ammonia-lyase activity"/>
    <property type="evidence" value="ECO:0007669"/>
    <property type="project" value="UniProtKB-UniRule"/>
</dbReference>
<dbReference type="GO" id="GO:0006520">
    <property type="term" value="P:amino acid metabolic process"/>
    <property type="evidence" value="ECO:0007669"/>
    <property type="project" value="InterPro"/>
</dbReference>
<dbReference type="GO" id="GO:0046336">
    <property type="term" value="P:ethanolamine catabolic process"/>
    <property type="evidence" value="ECO:0007669"/>
    <property type="project" value="UniProtKB-UniRule"/>
</dbReference>
<dbReference type="FunFam" id="3.40.50.11240:FF:000001">
    <property type="entry name" value="Ethanolamine ammonia-lyase light chain"/>
    <property type="match status" value="1"/>
</dbReference>
<dbReference type="Gene3D" id="6.10.140.690">
    <property type="match status" value="1"/>
</dbReference>
<dbReference type="Gene3D" id="6.10.250.2060">
    <property type="match status" value="1"/>
</dbReference>
<dbReference type="Gene3D" id="3.40.50.11240">
    <property type="entry name" value="Ethanolamine ammonia-lyase light chain (EutC)"/>
    <property type="match status" value="1"/>
</dbReference>
<dbReference type="HAMAP" id="MF_00601">
    <property type="entry name" value="EutC"/>
    <property type="match status" value="1"/>
</dbReference>
<dbReference type="InterPro" id="IPR009246">
    <property type="entry name" value="EutC"/>
</dbReference>
<dbReference type="InterPro" id="IPR042251">
    <property type="entry name" value="EutC_C"/>
</dbReference>
<dbReference type="NCBIfam" id="NF003971">
    <property type="entry name" value="PRK05465.1"/>
    <property type="match status" value="1"/>
</dbReference>
<dbReference type="PANTHER" id="PTHR39330">
    <property type="entry name" value="ETHANOLAMINE AMMONIA-LYASE LIGHT CHAIN"/>
    <property type="match status" value="1"/>
</dbReference>
<dbReference type="PANTHER" id="PTHR39330:SF1">
    <property type="entry name" value="ETHANOLAMINE AMMONIA-LYASE SMALL SUBUNIT"/>
    <property type="match status" value="1"/>
</dbReference>
<dbReference type="Pfam" id="PF05985">
    <property type="entry name" value="EutC"/>
    <property type="match status" value="1"/>
</dbReference>
<dbReference type="PIRSF" id="PIRSF018982">
    <property type="entry name" value="EutC"/>
    <property type="match status" value="1"/>
</dbReference>
<gene>
    <name evidence="1" type="primary">eutC</name>
    <name type="ordered locus">SeSA_A2691</name>
</gene>
<comment type="function">
    <text evidence="1">Catalyzes the deamination of various vicinal amino-alcohols to oxo compounds. Allows this organism to utilize ethanolamine as the sole source of nitrogen and carbon in the presence of external vitamin B12.</text>
</comment>
<comment type="catalytic activity">
    <reaction evidence="1">
        <text>ethanolamine = acetaldehyde + NH4(+)</text>
        <dbReference type="Rhea" id="RHEA:15313"/>
        <dbReference type="ChEBI" id="CHEBI:15343"/>
        <dbReference type="ChEBI" id="CHEBI:28938"/>
        <dbReference type="ChEBI" id="CHEBI:57603"/>
        <dbReference type="EC" id="4.3.1.7"/>
    </reaction>
</comment>
<comment type="cofactor">
    <cofactor evidence="1">
        <name>adenosylcob(III)alamin</name>
        <dbReference type="ChEBI" id="CHEBI:18408"/>
    </cofactor>
    <text evidence="1">Binds between the large and small subunits.</text>
</comment>
<comment type="pathway">
    <text evidence="1">Amine and polyamine degradation; ethanolamine degradation.</text>
</comment>
<comment type="subunit">
    <text evidence="1">The basic unit is a heterodimer which dimerizes to form tetramers. The heterotetramers trimerize; 6 large subunits form a core ring with 6 small subunits projecting outwards.</text>
</comment>
<comment type="subcellular location">
    <subcellularLocation>
        <location evidence="1">Bacterial microcompartment</location>
    </subcellularLocation>
</comment>
<comment type="similarity">
    <text evidence="1">Belongs to the EutC family.</text>
</comment>
<accession>B4TR32</accession>
<proteinExistence type="inferred from homology"/>
<name>EUTC_SALSV</name>
<organism>
    <name type="scientific">Salmonella schwarzengrund (strain CVM19633)</name>
    <dbReference type="NCBI Taxonomy" id="439843"/>
    <lineage>
        <taxon>Bacteria</taxon>
        <taxon>Pseudomonadati</taxon>
        <taxon>Pseudomonadota</taxon>
        <taxon>Gammaproteobacteria</taxon>
        <taxon>Enterobacterales</taxon>
        <taxon>Enterobacteriaceae</taxon>
        <taxon>Salmonella</taxon>
    </lineage>
</organism>
<evidence type="ECO:0000255" key="1">
    <source>
        <dbReference type="HAMAP-Rule" id="MF_00601"/>
    </source>
</evidence>